<accession>A8GCD7</accession>
<dbReference type="EMBL" id="CP000826">
    <property type="protein sequence ID" value="ABV40777.1"/>
    <property type="molecule type" value="Genomic_DNA"/>
</dbReference>
<dbReference type="SMR" id="A8GCD7"/>
<dbReference type="STRING" id="399741.Spro_1673"/>
<dbReference type="KEGG" id="spe:Spro_1673"/>
<dbReference type="eggNOG" id="COG2127">
    <property type="taxonomic scope" value="Bacteria"/>
</dbReference>
<dbReference type="HOGENOM" id="CLU_134358_2_1_6"/>
<dbReference type="OrthoDB" id="9796121at2"/>
<dbReference type="GO" id="GO:0030163">
    <property type="term" value="P:protein catabolic process"/>
    <property type="evidence" value="ECO:0007669"/>
    <property type="project" value="InterPro"/>
</dbReference>
<dbReference type="GO" id="GO:0006508">
    <property type="term" value="P:proteolysis"/>
    <property type="evidence" value="ECO:0007669"/>
    <property type="project" value="UniProtKB-UniRule"/>
</dbReference>
<dbReference type="FunFam" id="3.30.1390.10:FF:000002">
    <property type="entry name" value="ATP-dependent Clp protease adapter protein ClpS"/>
    <property type="match status" value="1"/>
</dbReference>
<dbReference type="Gene3D" id="3.30.1390.10">
    <property type="match status" value="1"/>
</dbReference>
<dbReference type="HAMAP" id="MF_00302">
    <property type="entry name" value="ClpS"/>
    <property type="match status" value="1"/>
</dbReference>
<dbReference type="InterPro" id="IPR022935">
    <property type="entry name" value="ClpS"/>
</dbReference>
<dbReference type="InterPro" id="IPR003769">
    <property type="entry name" value="ClpS_core"/>
</dbReference>
<dbReference type="InterPro" id="IPR014719">
    <property type="entry name" value="Ribosomal_bL12_C/ClpS-like"/>
</dbReference>
<dbReference type="NCBIfam" id="NF000670">
    <property type="entry name" value="PRK00033.1-3"/>
    <property type="match status" value="1"/>
</dbReference>
<dbReference type="NCBIfam" id="NF000672">
    <property type="entry name" value="PRK00033.1-5"/>
    <property type="match status" value="1"/>
</dbReference>
<dbReference type="PANTHER" id="PTHR33473:SF19">
    <property type="entry name" value="ATP-DEPENDENT CLP PROTEASE ADAPTER PROTEIN CLPS"/>
    <property type="match status" value="1"/>
</dbReference>
<dbReference type="PANTHER" id="PTHR33473">
    <property type="entry name" value="ATP-DEPENDENT CLP PROTEASE ADAPTER PROTEIN CLPS1, CHLOROPLASTIC"/>
    <property type="match status" value="1"/>
</dbReference>
<dbReference type="Pfam" id="PF02617">
    <property type="entry name" value="ClpS"/>
    <property type="match status" value="1"/>
</dbReference>
<dbReference type="SUPFAM" id="SSF54736">
    <property type="entry name" value="ClpS-like"/>
    <property type="match status" value="1"/>
</dbReference>
<name>CLPS_SERP5</name>
<evidence type="ECO:0000255" key="1">
    <source>
        <dbReference type="HAMAP-Rule" id="MF_00302"/>
    </source>
</evidence>
<feature type="chain" id="PRO_1000059319" description="ATP-dependent Clp protease adapter protein ClpS">
    <location>
        <begin position="1"/>
        <end position="106"/>
    </location>
</feature>
<organism>
    <name type="scientific">Serratia proteamaculans (strain 568)</name>
    <dbReference type="NCBI Taxonomy" id="399741"/>
    <lineage>
        <taxon>Bacteria</taxon>
        <taxon>Pseudomonadati</taxon>
        <taxon>Pseudomonadota</taxon>
        <taxon>Gammaproteobacteria</taxon>
        <taxon>Enterobacterales</taxon>
        <taxon>Yersiniaceae</taxon>
        <taxon>Serratia</taxon>
    </lineage>
</organism>
<comment type="function">
    <text evidence="1">Involved in the modulation of the specificity of the ClpAP-mediated ATP-dependent protein degradation.</text>
</comment>
<comment type="subunit">
    <text evidence="1">Binds to the N-terminal domain of the chaperone ClpA.</text>
</comment>
<comment type="similarity">
    <text evidence="1">Belongs to the ClpS family.</text>
</comment>
<proteinExistence type="inferred from homology"/>
<protein>
    <recommendedName>
        <fullName evidence="1">ATP-dependent Clp protease adapter protein ClpS</fullName>
    </recommendedName>
</protein>
<reference key="1">
    <citation type="submission" date="2007-09" db="EMBL/GenBank/DDBJ databases">
        <title>Complete sequence of chromosome of Serratia proteamaculans 568.</title>
        <authorList>
            <consortium name="US DOE Joint Genome Institute"/>
            <person name="Copeland A."/>
            <person name="Lucas S."/>
            <person name="Lapidus A."/>
            <person name="Barry K."/>
            <person name="Glavina del Rio T."/>
            <person name="Dalin E."/>
            <person name="Tice H."/>
            <person name="Pitluck S."/>
            <person name="Chain P."/>
            <person name="Malfatti S."/>
            <person name="Shin M."/>
            <person name="Vergez L."/>
            <person name="Schmutz J."/>
            <person name="Larimer F."/>
            <person name="Land M."/>
            <person name="Hauser L."/>
            <person name="Kyrpides N."/>
            <person name="Kim E."/>
            <person name="Taghavi S."/>
            <person name="Newman L."/>
            <person name="Vangronsveld J."/>
            <person name="van der Lelie D."/>
            <person name="Richardson P."/>
        </authorList>
    </citation>
    <scope>NUCLEOTIDE SEQUENCE [LARGE SCALE GENOMIC DNA]</scope>
    <source>
        <strain>568</strain>
    </source>
</reference>
<gene>
    <name evidence="1" type="primary">clpS</name>
    <name type="ordered locus">Spro_1673</name>
</gene>
<sequence length="106" mass="12293">MGNNNDWLNFEHLAEEKQIDAVKPPSMYKVILNNDDYTPMEFVIDVLQKFFSYDIERATQLMLTVHYQGKAICGVFTAEVAETKVVHVNRYARENEHPLLCTLEKA</sequence>